<name>RHAB_SALPB</name>
<accession>A9MZC6</accession>
<dbReference type="EC" id="2.7.1.5" evidence="1"/>
<dbReference type="EMBL" id="CP000886">
    <property type="protein sequence ID" value="ABX70304.1"/>
    <property type="molecule type" value="Genomic_DNA"/>
</dbReference>
<dbReference type="RefSeq" id="WP_000143959.1">
    <property type="nucleotide sequence ID" value="NC_010102.1"/>
</dbReference>
<dbReference type="SMR" id="A9MZC6"/>
<dbReference type="KEGG" id="spq:SPAB_05013"/>
<dbReference type="PATRIC" id="fig|1016998.12.peg.4705"/>
<dbReference type="HOGENOM" id="CLU_039395_0_0_6"/>
<dbReference type="BioCyc" id="SENT1016998:SPAB_RS20400-MONOMER"/>
<dbReference type="UniPathway" id="UPA00541">
    <property type="reaction ID" value="UER00602"/>
</dbReference>
<dbReference type="Proteomes" id="UP000008556">
    <property type="component" value="Chromosome"/>
</dbReference>
<dbReference type="GO" id="GO:0005829">
    <property type="term" value="C:cytosol"/>
    <property type="evidence" value="ECO:0007669"/>
    <property type="project" value="TreeGrafter"/>
</dbReference>
<dbReference type="GO" id="GO:0005524">
    <property type="term" value="F:ATP binding"/>
    <property type="evidence" value="ECO:0007669"/>
    <property type="project" value="UniProtKB-KW"/>
</dbReference>
<dbReference type="GO" id="GO:0004370">
    <property type="term" value="F:glycerol kinase activity"/>
    <property type="evidence" value="ECO:0007669"/>
    <property type="project" value="TreeGrafter"/>
</dbReference>
<dbReference type="GO" id="GO:0008993">
    <property type="term" value="F:rhamnulokinase activity"/>
    <property type="evidence" value="ECO:0007669"/>
    <property type="project" value="UniProtKB-UniRule"/>
</dbReference>
<dbReference type="GO" id="GO:0006071">
    <property type="term" value="P:glycerol metabolic process"/>
    <property type="evidence" value="ECO:0007669"/>
    <property type="project" value="TreeGrafter"/>
</dbReference>
<dbReference type="GO" id="GO:0019301">
    <property type="term" value="P:rhamnose catabolic process"/>
    <property type="evidence" value="ECO:0007669"/>
    <property type="project" value="UniProtKB-UniRule"/>
</dbReference>
<dbReference type="CDD" id="cd07771">
    <property type="entry name" value="ASKHA_NBD_FGGY_RhaB-like"/>
    <property type="match status" value="1"/>
</dbReference>
<dbReference type="FunFam" id="3.30.420.40:FF:000064">
    <property type="entry name" value="Rhamnulokinase"/>
    <property type="match status" value="1"/>
</dbReference>
<dbReference type="FunFam" id="3.30.420.40:FF:000073">
    <property type="entry name" value="Rhamnulokinase"/>
    <property type="match status" value="1"/>
</dbReference>
<dbReference type="Gene3D" id="3.30.420.40">
    <property type="match status" value="2"/>
</dbReference>
<dbReference type="HAMAP" id="MF_01535">
    <property type="entry name" value="Rhamnulokinase"/>
    <property type="match status" value="1"/>
</dbReference>
<dbReference type="InterPro" id="IPR043129">
    <property type="entry name" value="ATPase_NBD"/>
</dbReference>
<dbReference type="InterPro" id="IPR018485">
    <property type="entry name" value="FGGY_C"/>
</dbReference>
<dbReference type="InterPro" id="IPR018484">
    <property type="entry name" value="FGGY_N"/>
</dbReference>
<dbReference type="InterPro" id="IPR013449">
    <property type="entry name" value="Rhamnulokinase"/>
</dbReference>
<dbReference type="NCBIfam" id="NF007925">
    <property type="entry name" value="PRK10640.1"/>
    <property type="match status" value="1"/>
</dbReference>
<dbReference type="NCBIfam" id="TIGR02627">
    <property type="entry name" value="rhamnulo_kin"/>
    <property type="match status" value="1"/>
</dbReference>
<dbReference type="PANTHER" id="PTHR10196:SF93">
    <property type="entry name" value="L-RHAMNULOKINASE"/>
    <property type="match status" value="1"/>
</dbReference>
<dbReference type="PANTHER" id="PTHR10196">
    <property type="entry name" value="SUGAR KINASE"/>
    <property type="match status" value="1"/>
</dbReference>
<dbReference type="Pfam" id="PF02782">
    <property type="entry name" value="FGGY_C"/>
    <property type="match status" value="1"/>
</dbReference>
<dbReference type="Pfam" id="PF00370">
    <property type="entry name" value="FGGY_N"/>
    <property type="match status" value="1"/>
</dbReference>
<dbReference type="SUPFAM" id="SSF53067">
    <property type="entry name" value="Actin-like ATPase domain"/>
    <property type="match status" value="2"/>
</dbReference>
<protein>
    <recommendedName>
        <fullName evidence="1">Rhamnulokinase</fullName>
        <shortName evidence="1">RhaB</shortName>
        <ecNumber evidence="1">2.7.1.5</ecNumber>
    </recommendedName>
    <alternativeName>
        <fullName evidence="1">ATP:L-rhamnulose phosphotransferase</fullName>
    </alternativeName>
    <alternativeName>
        <fullName evidence="1">L-rhamnulose 1-kinase</fullName>
    </alternativeName>
    <alternativeName>
        <fullName evidence="1">Rhamnulose kinase</fullName>
    </alternativeName>
</protein>
<comment type="function">
    <text evidence="1">Involved in the catabolism of L-rhamnose (6-deoxy-L-mannose). Catalyzes the transfer of the gamma-phosphate group from ATP to the 1-hydroxyl group of L-rhamnulose to yield L-rhamnulose 1-phosphate.</text>
</comment>
<comment type="catalytic activity">
    <reaction evidence="1">
        <text>L-rhamnulose + ATP = L-rhamnulose 1-phosphate + ADP + H(+)</text>
        <dbReference type="Rhea" id="RHEA:20117"/>
        <dbReference type="ChEBI" id="CHEBI:15378"/>
        <dbReference type="ChEBI" id="CHEBI:17897"/>
        <dbReference type="ChEBI" id="CHEBI:30616"/>
        <dbReference type="ChEBI" id="CHEBI:58313"/>
        <dbReference type="ChEBI" id="CHEBI:456216"/>
        <dbReference type="EC" id="2.7.1.5"/>
    </reaction>
</comment>
<comment type="cofactor">
    <cofactor evidence="1">
        <name>Mg(2+)</name>
        <dbReference type="ChEBI" id="CHEBI:18420"/>
    </cofactor>
</comment>
<comment type="pathway">
    <text evidence="1">Carbohydrate degradation; L-rhamnose degradation; glycerone phosphate from L-rhamnose: step 2/3.</text>
</comment>
<comment type="similarity">
    <text evidence="1">Belongs to the rhamnulokinase family.</text>
</comment>
<organism>
    <name type="scientific">Salmonella paratyphi B (strain ATCC BAA-1250 / SPB7)</name>
    <dbReference type="NCBI Taxonomy" id="1016998"/>
    <lineage>
        <taxon>Bacteria</taxon>
        <taxon>Pseudomonadati</taxon>
        <taxon>Pseudomonadota</taxon>
        <taxon>Gammaproteobacteria</taxon>
        <taxon>Enterobacterales</taxon>
        <taxon>Enterobacteriaceae</taxon>
        <taxon>Salmonella</taxon>
    </lineage>
</organism>
<evidence type="ECO:0000255" key="1">
    <source>
        <dbReference type="HAMAP-Rule" id="MF_01535"/>
    </source>
</evidence>
<proteinExistence type="inferred from homology"/>
<reference key="1">
    <citation type="submission" date="2007-11" db="EMBL/GenBank/DDBJ databases">
        <authorList>
            <consortium name="The Salmonella enterica serovar Paratyphi B Genome Sequencing Project"/>
            <person name="McClelland M."/>
            <person name="Sanderson E.K."/>
            <person name="Porwollik S."/>
            <person name="Spieth J."/>
            <person name="Clifton W.S."/>
            <person name="Fulton R."/>
            <person name="Cordes M."/>
            <person name="Wollam A."/>
            <person name="Shah N."/>
            <person name="Pepin K."/>
            <person name="Bhonagiri V."/>
            <person name="Nash W."/>
            <person name="Johnson M."/>
            <person name="Thiruvilangam P."/>
            <person name="Wilson R."/>
        </authorList>
    </citation>
    <scope>NUCLEOTIDE SEQUENCE [LARGE SCALE GENOMIC DNA]</scope>
    <source>
        <strain>ATCC BAA-1250 / SPB7</strain>
    </source>
</reference>
<gene>
    <name evidence="1" type="primary">rhaB</name>
    <name type="ordered locus">SPAB_05013</name>
</gene>
<sequence length="489" mass="54544">MTFRHCVAVDLGASSGRVMLARYDSKHRTLTLREIHRFVNCLQKTDGFDTWDIDSLEKDIRLGLKKVCNEGILIDSIGIDTWGVDYVLLDKQGQRVGLPVSYRDNRTTGIMPQALVQIGKSEIYRRSGIQFLPFNTIYQLRALTKQQPELTAQVAHALLMPDYFSYRLTGEMNWEYTNATTTQLVNINTDDWDDTLLAWTGAKKSWFGRPSHPGNVIGDWICPQGNRIPVVAVASHDTASAVIASPLANKHSAYLSSGTWSLMGFESKKPYTTDEALAANITNEGGAEGRYRVLKNIMGLWLLQRVLKERRITDLPALIAQTEALPACRFLINPNDDRFINPDDMRAEIQAACRETDQPVPVSDAELARCIFDSLALLYADILHELANLRGEKFTQLHIVGGGCQNALLNQLCADACGIRVMAGPVEASTLGNIGIQLMTLDELNNVDDFRQVVSANYDLTTYIPNPDSEIARHVAQFQPKRQTKELCA</sequence>
<feature type="chain" id="PRO_1000087602" description="Rhamnulokinase">
    <location>
        <begin position="1"/>
        <end position="489"/>
    </location>
</feature>
<feature type="active site" description="Proton acceptor" evidence="1">
    <location>
        <position position="237"/>
    </location>
</feature>
<feature type="binding site" evidence="1">
    <location>
        <begin position="13"/>
        <end position="17"/>
    </location>
    <ligand>
        <name>ATP</name>
        <dbReference type="ChEBI" id="CHEBI:30616"/>
    </ligand>
</feature>
<feature type="binding site" evidence="1">
    <location>
        <position position="83"/>
    </location>
    <ligand>
        <name>substrate</name>
    </ligand>
</feature>
<feature type="binding site" evidence="1">
    <location>
        <begin position="236"/>
        <end position="238"/>
    </location>
    <ligand>
        <name>substrate</name>
    </ligand>
</feature>
<feature type="binding site" evidence="1">
    <location>
        <position position="259"/>
    </location>
    <ligand>
        <name>ATP</name>
        <dbReference type="ChEBI" id="CHEBI:30616"/>
    </ligand>
</feature>
<feature type="binding site" evidence="1">
    <location>
        <position position="296"/>
    </location>
    <ligand>
        <name>substrate</name>
    </ligand>
</feature>
<feature type="binding site" evidence="1">
    <location>
        <position position="304"/>
    </location>
    <ligand>
        <name>ATP</name>
        <dbReference type="ChEBI" id="CHEBI:30616"/>
    </ligand>
</feature>
<feature type="binding site" evidence="1">
    <location>
        <position position="402"/>
    </location>
    <ligand>
        <name>ATP</name>
        <dbReference type="ChEBI" id="CHEBI:30616"/>
    </ligand>
</feature>
<feature type="disulfide bond" evidence="1">
    <location>
        <begin position="68"/>
        <end position="222"/>
    </location>
</feature>
<feature type="disulfide bond" evidence="1">
    <location>
        <begin position="353"/>
        <end position="370"/>
    </location>
</feature>
<feature type="disulfide bond" evidence="1">
    <location>
        <begin position="413"/>
        <end position="417"/>
    </location>
</feature>
<keyword id="KW-0067">ATP-binding</keyword>
<keyword id="KW-1015">Disulfide bond</keyword>
<keyword id="KW-0418">Kinase</keyword>
<keyword id="KW-0460">Magnesium</keyword>
<keyword id="KW-0547">Nucleotide-binding</keyword>
<keyword id="KW-0684">Rhamnose metabolism</keyword>
<keyword id="KW-0808">Transferase</keyword>